<accession>A2RXI5</accession>
<feature type="chain" id="PRO_1000067295" description="L-aspartate dehydrogenase">
    <location>
        <begin position="1"/>
        <end position="271"/>
    </location>
</feature>
<feature type="active site" evidence="1">
    <location>
        <position position="224"/>
    </location>
</feature>
<feature type="binding site" evidence="1">
    <location>
        <position position="128"/>
    </location>
    <ligand>
        <name>NAD(+)</name>
        <dbReference type="ChEBI" id="CHEBI:57540"/>
    </ligand>
</feature>
<feature type="binding site" evidence="1">
    <location>
        <position position="194"/>
    </location>
    <ligand>
        <name>NAD(+)</name>
        <dbReference type="ChEBI" id="CHEBI:57540"/>
    </ligand>
</feature>
<evidence type="ECO:0000255" key="1">
    <source>
        <dbReference type="HAMAP-Rule" id="MF_01265"/>
    </source>
</evidence>
<comment type="function">
    <text evidence="1">Specifically catalyzes the NAD or NADP-dependent dehydrogenation of L-aspartate to iminoaspartate.</text>
</comment>
<comment type="catalytic activity">
    <reaction evidence="1">
        <text>L-aspartate + NADP(+) + H2O = oxaloacetate + NH4(+) + NADPH + H(+)</text>
        <dbReference type="Rhea" id="RHEA:11784"/>
        <dbReference type="ChEBI" id="CHEBI:15377"/>
        <dbReference type="ChEBI" id="CHEBI:15378"/>
        <dbReference type="ChEBI" id="CHEBI:16452"/>
        <dbReference type="ChEBI" id="CHEBI:28938"/>
        <dbReference type="ChEBI" id="CHEBI:29991"/>
        <dbReference type="ChEBI" id="CHEBI:57783"/>
        <dbReference type="ChEBI" id="CHEBI:58349"/>
        <dbReference type="EC" id="1.4.1.21"/>
    </reaction>
</comment>
<comment type="catalytic activity">
    <reaction evidence="1">
        <text>L-aspartate + NAD(+) + H2O = oxaloacetate + NH4(+) + NADH + H(+)</text>
        <dbReference type="Rhea" id="RHEA:11788"/>
        <dbReference type="ChEBI" id="CHEBI:15377"/>
        <dbReference type="ChEBI" id="CHEBI:15378"/>
        <dbReference type="ChEBI" id="CHEBI:16452"/>
        <dbReference type="ChEBI" id="CHEBI:28938"/>
        <dbReference type="ChEBI" id="CHEBI:29991"/>
        <dbReference type="ChEBI" id="CHEBI:57540"/>
        <dbReference type="ChEBI" id="CHEBI:57945"/>
        <dbReference type="EC" id="1.4.1.21"/>
    </reaction>
</comment>
<comment type="pathway">
    <text evidence="1">Cofactor biosynthesis; NAD(+) biosynthesis; iminoaspartate from L-aspartate (dehydrogenase route): step 1/1.</text>
</comment>
<comment type="miscellaneous">
    <text evidence="1">The iminoaspartate product is unstable in aqueous solution and can decompose to oxaloacetate and ammonia.</text>
</comment>
<comment type="similarity">
    <text evidence="1">Belongs to the L-aspartate dehydrogenase family.</text>
</comment>
<keyword id="KW-0520">NAD</keyword>
<keyword id="KW-0521">NADP</keyword>
<keyword id="KW-0560">Oxidoreductase</keyword>
<keyword id="KW-0662">Pyridine nucleotide biosynthesis</keyword>
<gene>
    <name evidence="1" type="primary">nadX</name>
    <name type="ordered locus">BMA10229_0588</name>
</gene>
<proteinExistence type="inferred from homology"/>
<name>ASPD_BURM9</name>
<dbReference type="EC" id="1.4.1.21" evidence="1"/>
<dbReference type="EMBL" id="CP000545">
    <property type="protein sequence ID" value="ABM98587.1"/>
    <property type="molecule type" value="Genomic_DNA"/>
</dbReference>
<dbReference type="RefSeq" id="WP_004195445.1">
    <property type="nucleotide sequence ID" value="NC_008835.1"/>
</dbReference>
<dbReference type="SMR" id="A2RXI5"/>
<dbReference type="KEGG" id="bml:BMA10229_0588"/>
<dbReference type="HOGENOM" id="CLU_089550_0_0_4"/>
<dbReference type="UniPathway" id="UPA00253">
    <property type="reaction ID" value="UER00456"/>
</dbReference>
<dbReference type="Proteomes" id="UP000002283">
    <property type="component" value="Chromosome II"/>
</dbReference>
<dbReference type="GO" id="GO:0033735">
    <property type="term" value="F:aspartate dehydrogenase activity"/>
    <property type="evidence" value="ECO:0007669"/>
    <property type="project" value="UniProtKB-EC"/>
</dbReference>
<dbReference type="GO" id="GO:0051287">
    <property type="term" value="F:NAD binding"/>
    <property type="evidence" value="ECO:0007669"/>
    <property type="project" value="UniProtKB-UniRule"/>
</dbReference>
<dbReference type="GO" id="GO:0050661">
    <property type="term" value="F:NADP binding"/>
    <property type="evidence" value="ECO:0007669"/>
    <property type="project" value="UniProtKB-UniRule"/>
</dbReference>
<dbReference type="GO" id="GO:0016639">
    <property type="term" value="F:oxidoreductase activity, acting on the CH-NH2 group of donors, NAD or NADP as acceptor"/>
    <property type="evidence" value="ECO:0007669"/>
    <property type="project" value="UniProtKB-UniRule"/>
</dbReference>
<dbReference type="GO" id="GO:0009435">
    <property type="term" value="P:NAD biosynthetic process"/>
    <property type="evidence" value="ECO:0007669"/>
    <property type="project" value="UniProtKB-UniRule"/>
</dbReference>
<dbReference type="Gene3D" id="3.30.360.10">
    <property type="entry name" value="Dihydrodipicolinate Reductase, domain 2"/>
    <property type="match status" value="1"/>
</dbReference>
<dbReference type="Gene3D" id="3.40.50.720">
    <property type="entry name" value="NAD(P)-binding Rossmann-like Domain"/>
    <property type="match status" value="1"/>
</dbReference>
<dbReference type="HAMAP" id="MF_01265">
    <property type="entry name" value="NadX"/>
    <property type="match status" value="1"/>
</dbReference>
<dbReference type="InterPro" id="IPR005106">
    <property type="entry name" value="Asp/hSer_DH_NAD-bd"/>
</dbReference>
<dbReference type="InterPro" id="IPR002811">
    <property type="entry name" value="Asp_DH"/>
</dbReference>
<dbReference type="InterPro" id="IPR020626">
    <property type="entry name" value="Asp_DH_prok"/>
</dbReference>
<dbReference type="InterPro" id="IPR011182">
    <property type="entry name" value="L-Asp_DH"/>
</dbReference>
<dbReference type="InterPro" id="IPR036291">
    <property type="entry name" value="NAD(P)-bd_dom_sf"/>
</dbReference>
<dbReference type="NCBIfam" id="NF009826">
    <property type="entry name" value="PRK13303.1-1"/>
    <property type="match status" value="1"/>
</dbReference>
<dbReference type="NCBIfam" id="NF009827">
    <property type="entry name" value="PRK13303.1-2"/>
    <property type="match status" value="1"/>
</dbReference>
<dbReference type="NCBIfam" id="NF009828">
    <property type="entry name" value="PRK13303.1-3"/>
    <property type="match status" value="1"/>
</dbReference>
<dbReference type="PANTHER" id="PTHR31873:SF6">
    <property type="entry name" value="ASPARTATE DEHYDROGENASE DOMAIN-CONTAINING PROTEIN"/>
    <property type="match status" value="1"/>
</dbReference>
<dbReference type="PANTHER" id="PTHR31873">
    <property type="entry name" value="L-ASPARTATE DEHYDROGENASE-RELATED"/>
    <property type="match status" value="1"/>
</dbReference>
<dbReference type="Pfam" id="PF01958">
    <property type="entry name" value="Asp_DH_C"/>
    <property type="match status" value="1"/>
</dbReference>
<dbReference type="Pfam" id="PF03447">
    <property type="entry name" value="NAD_binding_3"/>
    <property type="match status" value="1"/>
</dbReference>
<dbReference type="PIRSF" id="PIRSF005227">
    <property type="entry name" value="Asp_dh_NAD_syn"/>
    <property type="match status" value="1"/>
</dbReference>
<dbReference type="SUPFAM" id="SSF55347">
    <property type="entry name" value="Glyceraldehyde-3-phosphate dehydrogenase-like, C-terminal domain"/>
    <property type="match status" value="1"/>
</dbReference>
<dbReference type="SUPFAM" id="SSF51735">
    <property type="entry name" value="NAD(P)-binding Rossmann-fold domains"/>
    <property type="match status" value="1"/>
</dbReference>
<reference key="1">
    <citation type="journal article" date="2010" name="Genome Biol. Evol.">
        <title>Continuing evolution of Burkholderia mallei through genome reduction and large-scale rearrangements.</title>
        <authorList>
            <person name="Losada L."/>
            <person name="Ronning C.M."/>
            <person name="DeShazer D."/>
            <person name="Woods D."/>
            <person name="Fedorova N."/>
            <person name="Kim H.S."/>
            <person name="Shabalina S.A."/>
            <person name="Pearson T.R."/>
            <person name="Brinkac L."/>
            <person name="Tan P."/>
            <person name="Nandi T."/>
            <person name="Crabtree J."/>
            <person name="Badger J."/>
            <person name="Beckstrom-Sternberg S."/>
            <person name="Saqib M."/>
            <person name="Schutzer S.E."/>
            <person name="Keim P."/>
            <person name="Nierman W.C."/>
        </authorList>
    </citation>
    <scope>NUCLEOTIDE SEQUENCE [LARGE SCALE GENOMIC DNA]</scope>
    <source>
        <strain>NCTC 10229</strain>
    </source>
</reference>
<organism>
    <name type="scientific">Burkholderia mallei (strain NCTC 10229)</name>
    <dbReference type="NCBI Taxonomy" id="412022"/>
    <lineage>
        <taxon>Bacteria</taxon>
        <taxon>Pseudomonadati</taxon>
        <taxon>Pseudomonadota</taxon>
        <taxon>Betaproteobacteria</taxon>
        <taxon>Burkholderiales</taxon>
        <taxon>Burkholderiaceae</taxon>
        <taxon>Burkholderia</taxon>
        <taxon>pseudomallei group</taxon>
    </lineage>
</organism>
<protein>
    <recommendedName>
        <fullName evidence="1">L-aspartate dehydrogenase</fullName>
        <ecNumber evidence="1">1.4.1.21</ecNumber>
    </recommendedName>
</protein>
<sequence length="271" mass="27747">MRNAHAPVDVAMIGFGAIGAAVYRAVEHDAALRVAHVIVPEHQCDAVRGALGERVDVVSSVDALACRPQFALECAGHGALVDHVVPLLKAGTDCAVASIGALSDLALLDALSNAADAGGATLTLLSGAIGGIDALAAARQGGLDEVRYIGRKPPLGWLGTPAEAICDLRAMAAEQTIFEGSARDAAQLYPRNANVAATVALAGVGLDATRVCLIADPAVTRNVHRIVARGAFGEMSIEMSGKPLPDNPKTSALTAFSAIRALRNRASHCVI</sequence>